<name>EIF2D_MOUSE</name>
<feature type="chain" id="PRO_0000130612" description="Eukaryotic translation initiation factor 2D">
    <location>
        <begin position="1"/>
        <end position="570"/>
    </location>
</feature>
<feature type="domain" description="PUA" evidence="3">
    <location>
        <begin position="93"/>
        <end position="173"/>
    </location>
</feature>
<feature type="domain" description="SWIB/MDM2" evidence="5">
    <location>
        <begin position="370"/>
        <end position="454"/>
    </location>
</feature>
<feature type="domain" description="SUI1" evidence="4">
    <location>
        <begin position="478"/>
        <end position="548"/>
    </location>
</feature>
<feature type="region of interest" description="Disordered" evidence="6">
    <location>
        <begin position="224"/>
        <end position="245"/>
    </location>
</feature>
<feature type="modified residue" description="N-acetylmethionine" evidence="2">
    <location>
        <position position="1"/>
    </location>
</feature>
<feature type="modified residue" description="Phosphoserine" evidence="9">
    <location>
        <position position="238"/>
    </location>
</feature>
<feature type="modified residue" description="Phosphoserine" evidence="9">
    <location>
        <position position="241"/>
    </location>
</feature>
<feature type="modified residue" description="Phosphoserine" evidence="2">
    <location>
        <position position="348"/>
    </location>
</feature>
<feature type="splice variant" id="VSP_016233" description="In isoform 2." evidence="7">
    <original>YRLPGKYIQGLEKAPKPGKK</original>
    <variation>NTGTLHLPAQYPHPHVQNKPEIPHLSCCGLPASHDSI</variation>
    <location>
        <begin position="551"/>
        <end position="570"/>
    </location>
</feature>
<feature type="sequence conflict" description="In Ref. 2; AAH24501." evidence="8" ref="2">
    <original>LWRS</original>
    <variation>HASA</variation>
    <location>
        <begin position="176"/>
        <end position="179"/>
    </location>
</feature>
<feature type="sequence conflict" description="In Ref. 3; AAC53056." evidence="8" ref="3">
    <original>W</original>
    <variation>V</variation>
    <location>
        <position position="177"/>
    </location>
</feature>
<feature type="sequence conflict" description="In Ref. 1; BAE36281." evidence="8" ref="1">
    <original>E</original>
    <variation>K</variation>
    <location>
        <position position="249"/>
    </location>
</feature>
<feature type="sequence conflict" description="In Ref. 1; BAE41662." evidence="8" ref="1">
    <original>K</original>
    <variation>E</variation>
    <location>
        <position position="268"/>
    </location>
</feature>
<feature type="sequence conflict" description="In Ref. 1; BAE40091." evidence="8" ref="1">
    <original>P</original>
    <variation>R</variation>
    <location>
        <position position="289"/>
    </location>
</feature>
<feature type="sequence conflict" description="In Ref. 1; BAC28591." evidence="8" ref="1">
    <original>S</original>
    <variation>P</variation>
    <location>
        <position position="341"/>
    </location>
</feature>
<feature type="sequence conflict" description="In Ref. 1; BAC29323/BAC38598 and 3." evidence="8" ref="1 3">
    <original>E</original>
    <variation>G</variation>
    <location>
        <position position="549"/>
    </location>
</feature>
<feature type="sequence conflict" description="In Ref. 1; BAC28591." evidence="8" ref="1">
    <original>EYR</original>
    <variation>IMW</variation>
    <location>
        <begin position="550"/>
        <end position="552"/>
    </location>
</feature>
<reference key="1">
    <citation type="journal article" date="2005" name="Science">
        <title>The transcriptional landscape of the mammalian genome.</title>
        <authorList>
            <person name="Carninci P."/>
            <person name="Kasukawa T."/>
            <person name="Katayama S."/>
            <person name="Gough J."/>
            <person name="Frith M.C."/>
            <person name="Maeda N."/>
            <person name="Oyama R."/>
            <person name="Ravasi T."/>
            <person name="Lenhard B."/>
            <person name="Wells C."/>
            <person name="Kodzius R."/>
            <person name="Shimokawa K."/>
            <person name="Bajic V.B."/>
            <person name="Brenner S.E."/>
            <person name="Batalov S."/>
            <person name="Forrest A.R."/>
            <person name="Zavolan M."/>
            <person name="Davis M.J."/>
            <person name="Wilming L.G."/>
            <person name="Aidinis V."/>
            <person name="Allen J.E."/>
            <person name="Ambesi-Impiombato A."/>
            <person name="Apweiler R."/>
            <person name="Aturaliya R.N."/>
            <person name="Bailey T.L."/>
            <person name="Bansal M."/>
            <person name="Baxter L."/>
            <person name="Beisel K.W."/>
            <person name="Bersano T."/>
            <person name="Bono H."/>
            <person name="Chalk A.M."/>
            <person name="Chiu K.P."/>
            <person name="Choudhary V."/>
            <person name="Christoffels A."/>
            <person name="Clutterbuck D.R."/>
            <person name="Crowe M.L."/>
            <person name="Dalla E."/>
            <person name="Dalrymple B.P."/>
            <person name="de Bono B."/>
            <person name="Della Gatta G."/>
            <person name="di Bernardo D."/>
            <person name="Down T."/>
            <person name="Engstrom P."/>
            <person name="Fagiolini M."/>
            <person name="Faulkner G."/>
            <person name="Fletcher C.F."/>
            <person name="Fukushima T."/>
            <person name="Furuno M."/>
            <person name="Futaki S."/>
            <person name="Gariboldi M."/>
            <person name="Georgii-Hemming P."/>
            <person name="Gingeras T.R."/>
            <person name="Gojobori T."/>
            <person name="Green R.E."/>
            <person name="Gustincich S."/>
            <person name="Harbers M."/>
            <person name="Hayashi Y."/>
            <person name="Hensch T.K."/>
            <person name="Hirokawa N."/>
            <person name="Hill D."/>
            <person name="Huminiecki L."/>
            <person name="Iacono M."/>
            <person name="Ikeo K."/>
            <person name="Iwama A."/>
            <person name="Ishikawa T."/>
            <person name="Jakt M."/>
            <person name="Kanapin A."/>
            <person name="Katoh M."/>
            <person name="Kawasawa Y."/>
            <person name="Kelso J."/>
            <person name="Kitamura H."/>
            <person name="Kitano H."/>
            <person name="Kollias G."/>
            <person name="Krishnan S.P."/>
            <person name="Kruger A."/>
            <person name="Kummerfeld S.K."/>
            <person name="Kurochkin I.V."/>
            <person name="Lareau L.F."/>
            <person name="Lazarevic D."/>
            <person name="Lipovich L."/>
            <person name="Liu J."/>
            <person name="Liuni S."/>
            <person name="McWilliam S."/>
            <person name="Madan Babu M."/>
            <person name="Madera M."/>
            <person name="Marchionni L."/>
            <person name="Matsuda H."/>
            <person name="Matsuzawa S."/>
            <person name="Miki H."/>
            <person name="Mignone F."/>
            <person name="Miyake S."/>
            <person name="Morris K."/>
            <person name="Mottagui-Tabar S."/>
            <person name="Mulder N."/>
            <person name="Nakano N."/>
            <person name="Nakauchi H."/>
            <person name="Ng P."/>
            <person name="Nilsson R."/>
            <person name="Nishiguchi S."/>
            <person name="Nishikawa S."/>
            <person name="Nori F."/>
            <person name="Ohara O."/>
            <person name="Okazaki Y."/>
            <person name="Orlando V."/>
            <person name="Pang K.C."/>
            <person name="Pavan W.J."/>
            <person name="Pavesi G."/>
            <person name="Pesole G."/>
            <person name="Petrovsky N."/>
            <person name="Piazza S."/>
            <person name="Reed J."/>
            <person name="Reid J.F."/>
            <person name="Ring B.Z."/>
            <person name="Ringwald M."/>
            <person name="Rost B."/>
            <person name="Ruan Y."/>
            <person name="Salzberg S.L."/>
            <person name="Sandelin A."/>
            <person name="Schneider C."/>
            <person name="Schoenbach C."/>
            <person name="Sekiguchi K."/>
            <person name="Semple C.A."/>
            <person name="Seno S."/>
            <person name="Sessa L."/>
            <person name="Sheng Y."/>
            <person name="Shibata Y."/>
            <person name="Shimada H."/>
            <person name="Shimada K."/>
            <person name="Silva D."/>
            <person name="Sinclair B."/>
            <person name="Sperling S."/>
            <person name="Stupka E."/>
            <person name="Sugiura K."/>
            <person name="Sultana R."/>
            <person name="Takenaka Y."/>
            <person name="Taki K."/>
            <person name="Tammoja K."/>
            <person name="Tan S.L."/>
            <person name="Tang S."/>
            <person name="Taylor M.S."/>
            <person name="Tegner J."/>
            <person name="Teichmann S.A."/>
            <person name="Ueda H.R."/>
            <person name="van Nimwegen E."/>
            <person name="Verardo R."/>
            <person name="Wei C.L."/>
            <person name="Yagi K."/>
            <person name="Yamanishi H."/>
            <person name="Zabarovsky E."/>
            <person name="Zhu S."/>
            <person name="Zimmer A."/>
            <person name="Hide W."/>
            <person name="Bult C."/>
            <person name="Grimmond S.M."/>
            <person name="Teasdale R.D."/>
            <person name="Liu E.T."/>
            <person name="Brusic V."/>
            <person name="Quackenbush J."/>
            <person name="Wahlestedt C."/>
            <person name="Mattick J.S."/>
            <person name="Hume D.A."/>
            <person name="Kai C."/>
            <person name="Sasaki D."/>
            <person name="Tomaru Y."/>
            <person name="Fukuda S."/>
            <person name="Kanamori-Katayama M."/>
            <person name="Suzuki M."/>
            <person name="Aoki J."/>
            <person name="Arakawa T."/>
            <person name="Iida J."/>
            <person name="Imamura K."/>
            <person name="Itoh M."/>
            <person name="Kato T."/>
            <person name="Kawaji H."/>
            <person name="Kawagashira N."/>
            <person name="Kawashima T."/>
            <person name="Kojima M."/>
            <person name="Kondo S."/>
            <person name="Konno H."/>
            <person name="Nakano K."/>
            <person name="Ninomiya N."/>
            <person name="Nishio T."/>
            <person name="Okada M."/>
            <person name="Plessy C."/>
            <person name="Shibata K."/>
            <person name="Shiraki T."/>
            <person name="Suzuki S."/>
            <person name="Tagami M."/>
            <person name="Waki K."/>
            <person name="Watahiki A."/>
            <person name="Okamura-Oho Y."/>
            <person name="Suzuki H."/>
            <person name="Kawai J."/>
            <person name="Hayashizaki Y."/>
        </authorList>
    </citation>
    <scope>NUCLEOTIDE SEQUENCE [LARGE SCALE MRNA] (ISOFORMS 1 AND 2)</scope>
    <source>
        <strain>BALB/cJ</strain>
        <strain>C57BL/6J</strain>
        <strain>NOD</strain>
        <tissue>Adrenal gland</tissue>
        <tissue>Cerebellum</tissue>
        <tissue>Diencephalon</tissue>
        <tissue>Embryo</tissue>
        <tissue>Testis</tissue>
    </source>
</reference>
<reference key="2">
    <citation type="journal article" date="2004" name="Genome Res.">
        <title>The status, quality, and expansion of the NIH full-length cDNA project: the Mammalian Gene Collection (MGC).</title>
        <authorList>
            <consortium name="The MGC Project Team"/>
        </authorList>
    </citation>
    <scope>NUCLEOTIDE SEQUENCE [LARGE SCALE MRNA] (ISOFORM 1)</scope>
    <source>
        <strain>FVB/N</strain>
        <tissue>Colon</tissue>
        <tissue>Mammary tumor</tissue>
    </source>
</reference>
<reference key="3">
    <citation type="journal article" date="1997" name="Genomics">
        <title>Assignment of the mouse ligatin gene (Lgtn) to chromosome 1F by in situ hybridization.</title>
        <authorList>
            <person name="Malnar-Dragojevic D."/>
            <person name="Trachtulec Z."/>
            <person name="Vincek V."/>
        </authorList>
    </citation>
    <scope>NUCLEOTIDE SEQUENCE [MRNA] OF 1-550</scope>
</reference>
<reference key="4">
    <citation type="journal article" date="2010" name="Cell">
        <title>A tissue-specific atlas of mouse protein phosphorylation and expression.</title>
        <authorList>
            <person name="Huttlin E.L."/>
            <person name="Jedrychowski M.P."/>
            <person name="Elias J.E."/>
            <person name="Goswami T."/>
            <person name="Rad R."/>
            <person name="Beausoleil S.A."/>
            <person name="Villen J."/>
            <person name="Haas W."/>
            <person name="Sowa M.E."/>
            <person name="Gygi S.P."/>
        </authorList>
    </citation>
    <scope>PHOSPHORYLATION [LARGE SCALE ANALYSIS] AT SER-238 AND SER-241</scope>
    <scope>IDENTIFICATION BY MASS SPECTROMETRY [LARGE SCALE ANALYSIS]</scope>
    <source>
        <tissue>Heart</tissue>
        <tissue>Kidney</tissue>
        <tissue>Liver</tissue>
        <tissue>Lung</tissue>
        <tissue>Pancreas</tissue>
        <tissue>Spleen</tissue>
        <tissue>Testis</tissue>
    </source>
</reference>
<organism>
    <name type="scientific">Mus musculus</name>
    <name type="common">Mouse</name>
    <dbReference type="NCBI Taxonomy" id="10090"/>
    <lineage>
        <taxon>Eukaryota</taxon>
        <taxon>Metazoa</taxon>
        <taxon>Chordata</taxon>
        <taxon>Craniata</taxon>
        <taxon>Vertebrata</taxon>
        <taxon>Euteleostomi</taxon>
        <taxon>Mammalia</taxon>
        <taxon>Eutheria</taxon>
        <taxon>Euarchontoglires</taxon>
        <taxon>Glires</taxon>
        <taxon>Rodentia</taxon>
        <taxon>Myomorpha</taxon>
        <taxon>Muroidea</taxon>
        <taxon>Muridae</taxon>
        <taxon>Murinae</taxon>
        <taxon>Mus</taxon>
        <taxon>Mus</taxon>
    </lineage>
</organism>
<proteinExistence type="evidence at protein level"/>
<protein>
    <recommendedName>
        <fullName>Eukaryotic translation initiation factor 2D</fullName>
        <shortName>eIF2D</shortName>
    </recommendedName>
    <alternativeName>
        <fullName>Ligatin</fullName>
    </alternativeName>
</protein>
<dbReference type="EMBL" id="AK034115">
    <property type="protein sequence ID" value="BAC28591.1"/>
    <property type="molecule type" value="mRNA"/>
</dbReference>
<dbReference type="EMBL" id="AK036154">
    <property type="protein sequence ID" value="BAC29323.1"/>
    <property type="molecule type" value="mRNA"/>
</dbReference>
<dbReference type="EMBL" id="AK046539">
    <property type="protein sequence ID" value="BAC32777.1"/>
    <property type="molecule type" value="mRNA"/>
</dbReference>
<dbReference type="EMBL" id="AK082748">
    <property type="protein sequence ID" value="BAC38598.1"/>
    <property type="molecule type" value="mRNA"/>
</dbReference>
<dbReference type="EMBL" id="AK083638">
    <property type="protein sequence ID" value="BAC38976.1"/>
    <property type="molecule type" value="mRNA"/>
</dbReference>
<dbReference type="EMBL" id="AK139052">
    <property type="protein sequence ID" value="BAE23874.1"/>
    <property type="molecule type" value="mRNA"/>
</dbReference>
<dbReference type="EMBL" id="AK161269">
    <property type="protein sequence ID" value="BAE36281.1"/>
    <property type="molecule type" value="mRNA"/>
</dbReference>
<dbReference type="EMBL" id="AK167980">
    <property type="protein sequence ID" value="BAE39972.1"/>
    <property type="molecule type" value="mRNA"/>
</dbReference>
<dbReference type="EMBL" id="AK168120">
    <property type="protein sequence ID" value="BAE40091.1"/>
    <property type="molecule type" value="mRNA"/>
</dbReference>
<dbReference type="EMBL" id="AK170252">
    <property type="protein sequence ID" value="BAE41662.1"/>
    <property type="molecule type" value="mRNA"/>
</dbReference>
<dbReference type="EMBL" id="AK170448">
    <property type="protein sequence ID" value="BAE41806.1"/>
    <property type="molecule type" value="mRNA"/>
</dbReference>
<dbReference type="EMBL" id="AK171115">
    <property type="protein sequence ID" value="BAE42257.1"/>
    <property type="molecule type" value="mRNA"/>
</dbReference>
<dbReference type="EMBL" id="BC024501">
    <property type="protein sequence ID" value="AAH24501.1"/>
    <property type="molecule type" value="mRNA"/>
</dbReference>
<dbReference type="EMBL" id="BC025036">
    <property type="protein sequence ID" value="AAH25036.1"/>
    <property type="molecule type" value="mRNA"/>
</dbReference>
<dbReference type="EMBL" id="U58337">
    <property type="protein sequence ID" value="AAC53056.1"/>
    <property type="status" value="ALT_FRAME"/>
    <property type="molecule type" value="mRNA"/>
</dbReference>
<dbReference type="CCDS" id="CCDS48354.1">
    <molecule id="Q61211-1"/>
</dbReference>
<dbReference type="RefSeq" id="NP_001129542.1">
    <molecule id="Q61211-1"/>
    <property type="nucleotide sequence ID" value="NM_001136070.2"/>
</dbReference>
<dbReference type="RefSeq" id="NP_001407230.1">
    <molecule id="Q61211-1"/>
    <property type="nucleotide sequence ID" value="NM_001420301.1"/>
</dbReference>
<dbReference type="RefSeq" id="NP_001407231.1">
    <molecule id="Q61211-1"/>
    <property type="nucleotide sequence ID" value="NM_001420302.1"/>
</dbReference>
<dbReference type="RefSeq" id="NP_034839.2">
    <property type="nucleotide sequence ID" value="NM_010709.3"/>
</dbReference>
<dbReference type="RefSeq" id="XP_006529228.1">
    <property type="nucleotide sequence ID" value="XM_006529165.3"/>
</dbReference>
<dbReference type="SMR" id="Q61211"/>
<dbReference type="BioGRID" id="201151">
    <property type="interactions" value="2"/>
</dbReference>
<dbReference type="FunCoup" id="Q61211">
    <property type="interactions" value="3072"/>
</dbReference>
<dbReference type="STRING" id="10090.ENSMUSP00000063894"/>
<dbReference type="iPTMnet" id="Q61211"/>
<dbReference type="PhosphoSitePlus" id="Q61211"/>
<dbReference type="SwissPalm" id="Q61211"/>
<dbReference type="PaxDb" id="10090-ENSMUSP00000063894"/>
<dbReference type="ProteomicsDB" id="275448">
    <molecule id="Q61211-1"/>
</dbReference>
<dbReference type="ProteomicsDB" id="275449">
    <molecule id="Q61211-2"/>
</dbReference>
<dbReference type="Pumba" id="Q61211"/>
<dbReference type="Antibodypedia" id="34586">
    <property type="antibodies" value="117 antibodies from 25 providers"/>
</dbReference>
<dbReference type="DNASU" id="16865"/>
<dbReference type="Ensembl" id="ENSMUST00000068805.14">
    <molecule id="Q61211-1"/>
    <property type="protein sequence ID" value="ENSMUSP00000063894.8"/>
    <property type="gene ID" value="ENSMUSG00000026427.17"/>
</dbReference>
<dbReference type="Ensembl" id="ENSMUST00000151874.8">
    <molecule id="Q61211-1"/>
    <property type="protein sequence ID" value="ENSMUSP00000138061.2"/>
    <property type="gene ID" value="ENSMUSG00000026427.17"/>
</dbReference>
<dbReference type="GeneID" id="16865"/>
<dbReference type="KEGG" id="mmu:16865"/>
<dbReference type="UCSC" id="uc007cmz.2">
    <molecule id="Q61211-1"/>
    <property type="organism name" value="mouse"/>
</dbReference>
<dbReference type="AGR" id="MGI:109342"/>
<dbReference type="CTD" id="1939"/>
<dbReference type="MGI" id="MGI:109342">
    <property type="gene designation" value="Eif2d"/>
</dbReference>
<dbReference type="VEuPathDB" id="HostDB:ENSMUSG00000026427"/>
<dbReference type="eggNOG" id="KOG2522">
    <property type="taxonomic scope" value="Eukaryota"/>
</dbReference>
<dbReference type="GeneTree" id="ENSGT00550000074865"/>
<dbReference type="HOGENOM" id="CLU_012487_2_0_1"/>
<dbReference type="InParanoid" id="Q61211"/>
<dbReference type="OMA" id="MFLKPYR"/>
<dbReference type="OrthoDB" id="199771at2759"/>
<dbReference type="PhylomeDB" id="Q61211"/>
<dbReference type="TreeFam" id="TF105830"/>
<dbReference type="BioGRID-ORCS" id="16865">
    <property type="hits" value="1 hit in 77 CRISPR screens"/>
</dbReference>
<dbReference type="ChiTaRS" id="Eif2d">
    <property type="organism name" value="mouse"/>
</dbReference>
<dbReference type="PRO" id="PR:Q61211"/>
<dbReference type="Proteomes" id="UP000000589">
    <property type="component" value="Chromosome 1"/>
</dbReference>
<dbReference type="RNAct" id="Q61211">
    <property type="molecule type" value="protein"/>
</dbReference>
<dbReference type="Bgee" id="ENSMUSG00000026427">
    <property type="expression patterns" value="Expressed in paneth cell and 263 other cell types or tissues"/>
</dbReference>
<dbReference type="ExpressionAtlas" id="Q61211">
    <property type="expression patterns" value="baseline and differential"/>
</dbReference>
<dbReference type="GO" id="GO:0005737">
    <property type="term" value="C:cytoplasm"/>
    <property type="evidence" value="ECO:0000250"/>
    <property type="project" value="UniProtKB"/>
</dbReference>
<dbReference type="GO" id="GO:0005829">
    <property type="term" value="C:cytosol"/>
    <property type="evidence" value="ECO:0007669"/>
    <property type="project" value="Ensembl"/>
</dbReference>
<dbReference type="GO" id="GO:0016604">
    <property type="term" value="C:nuclear body"/>
    <property type="evidence" value="ECO:0007669"/>
    <property type="project" value="Ensembl"/>
</dbReference>
<dbReference type="GO" id="GO:0003723">
    <property type="term" value="F:RNA binding"/>
    <property type="evidence" value="ECO:0007669"/>
    <property type="project" value="InterPro"/>
</dbReference>
<dbReference type="GO" id="GO:0003743">
    <property type="term" value="F:translation initiation factor activity"/>
    <property type="evidence" value="ECO:0000250"/>
    <property type="project" value="UniProtKB"/>
</dbReference>
<dbReference type="GO" id="GO:0001731">
    <property type="term" value="P:formation of translation preinitiation complex"/>
    <property type="evidence" value="ECO:0007669"/>
    <property type="project" value="Ensembl"/>
</dbReference>
<dbReference type="GO" id="GO:0075522">
    <property type="term" value="P:IRES-dependent viral translational initiation"/>
    <property type="evidence" value="ECO:0007669"/>
    <property type="project" value="Ensembl"/>
</dbReference>
<dbReference type="GO" id="GO:0032790">
    <property type="term" value="P:ribosome disassembly"/>
    <property type="evidence" value="ECO:0007669"/>
    <property type="project" value="Ensembl"/>
</dbReference>
<dbReference type="CDD" id="cd11608">
    <property type="entry name" value="eIF2D_C"/>
    <property type="match status" value="1"/>
</dbReference>
<dbReference type="CDD" id="cd11610">
    <property type="entry name" value="eIF2D_N"/>
    <property type="match status" value="1"/>
</dbReference>
<dbReference type="CDD" id="cd21156">
    <property type="entry name" value="PUA_eIF2d-like"/>
    <property type="match status" value="1"/>
</dbReference>
<dbReference type="FunFam" id="3.10.400.20:FF:000002">
    <property type="entry name" value="Eukaryotic translation initiation factor 2D"/>
    <property type="match status" value="1"/>
</dbReference>
<dbReference type="FunFam" id="3.30.780.10:FF:000007">
    <property type="entry name" value="Putative eukaryotic translation initiation factor 2d"/>
    <property type="match status" value="1"/>
</dbReference>
<dbReference type="Gene3D" id="3.10.400.20">
    <property type="match status" value="1"/>
</dbReference>
<dbReference type="Gene3D" id="3.30.780.10">
    <property type="entry name" value="SUI1-like domain"/>
    <property type="match status" value="1"/>
</dbReference>
<dbReference type="InterPro" id="IPR039757">
    <property type="entry name" value="EIF2D"/>
</dbReference>
<dbReference type="InterPro" id="IPR048247">
    <property type="entry name" value="eIF2D_N"/>
</dbReference>
<dbReference type="InterPro" id="IPR039759">
    <property type="entry name" value="eIF2D_SUI1"/>
</dbReference>
<dbReference type="InterPro" id="IPR041366">
    <property type="entry name" value="Pre-PUA"/>
</dbReference>
<dbReference type="InterPro" id="IPR002478">
    <property type="entry name" value="PUA"/>
</dbReference>
<dbReference type="InterPro" id="IPR015947">
    <property type="entry name" value="PUA-like_sf"/>
</dbReference>
<dbReference type="InterPro" id="IPR048248">
    <property type="entry name" value="PUA_eIF2d-like"/>
</dbReference>
<dbReference type="InterPro" id="IPR001950">
    <property type="entry name" value="SUI1"/>
</dbReference>
<dbReference type="InterPro" id="IPR036877">
    <property type="entry name" value="SUI1_dom_sf"/>
</dbReference>
<dbReference type="InterPro" id="IPR036885">
    <property type="entry name" value="SWIB_MDM2_dom_sf"/>
</dbReference>
<dbReference type="InterPro" id="IPR003121">
    <property type="entry name" value="SWIB_MDM2_domain"/>
</dbReference>
<dbReference type="PANTHER" id="PTHR12217">
    <property type="entry name" value="EUKARYOTIC TRANSLATION INITIATION FACTOR 2D"/>
    <property type="match status" value="1"/>
</dbReference>
<dbReference type="PANTHER" id="PTHR12217:SF4">
    <property type="entry name" value="EUKARYOTIC TRANSLATION INITIATION FACTOR 2D"/>
    <property type="match status" value="1"/>
</dbReference>
<dbReference type="Pfam" id="PF17832">
    <property type="entry name" value="Pre-PUA"/>
    <property type="match status" value="1"/>
</dbReference>
<dbReference type="Pfam" id="PF01253">
    <property type="entry name" value="SUI1"/>
    <property type="match status" value="1"/>
</dbReference>
<dbReference type="Pfam" id="PF25304">
    <property type="entry name" value="WH_eIF2D"/>
    <property type="match status" value="1"/>
</dbReference>
<dbReference type="SMART" id="SM00359">
    <property type="entry name" value="PUA"/>
    <property type="match status" value="1"/>
</dbReference>
<dbReference type="SUPFAM" id="SSF55159">
    <property type="entry name" value="eIF1-like"/>
    <property type="match status" value="1"/>
</dbReference>
<dbReference type="SUPFAM" id="SSF88697">
    <property type="entry name" value="PUA domain-like"/>
    <property type="match status" value="1"/>
</dbReference>
<dbReference type="SUPFAM" id="SSF47592">
    <property type="entry name" value="SWIB/MDM2 domain"/>
    <property type="match status" value="1"/>
</dbReference>
<dbReference type="PROSITE" id="PS50890">
    <property type="entry name" value="PUA"/>
    <property type="match status" value="1"/>
</dbReference>
<dbReference type="PROSITE" id="PS50296">
    <property type="entry name" value="SUI1"/>
    <property type="match status" value="1"/>
</dbReference>
<dbReference type="PROSITE" id="PS51925">
    <property type="entry name" value="SWIB_MDM2"/>
    <property type="match status" value="1"/>
</dbReference>
<comment type="function">
    <text evidence="1">Translation initiation factor that is able to deliver tRNA to the P-site of the eukaryotic ribosome in a GTP-independent manner. The binding of Met-tRNA(I) occurs after the AUG codon finds its position in the P-site of 40S ribosomes, the situation that takes place during initiation complex formation on some specific RNAs. Its activity in tRNA binding with 40S subunits does not require the presence of the aminoacyl moiety. Possesses the unique ability to deliver non-Met (elongator) tRNAs into the P-site of the 40S subunit. In addition to its role in initiation, can promote release of deacylated tRNA and mRNA from recycled 40S subunits following ABCE1-mediated dissociation of post-termination ribosomal complexes into subunits (By similarity).</text>
</comment>
<comment type="subcellular location">
    <subcellularLocation>
        <location evidence="1">Cytoplasm</location>
    </subcellularLocation>
</comment>
<comment type="alternative products">
    <event type="alternative splicing"/>
    <isoform>
        <id>Q61211-1</id>
        <name>1</name>
        <sequence type="displayed"/>
    </isoform>
    <isoform>
        <id>Q61211-2</id>
        <name>2</name>
        <sequence type="described" ref="VSP_016233"/>
    </isoform>
</comment>
<comment type="similarity">
    <text evidence="8">Belongs to the eIF2D family.</text>
</comment>
<comment type="sequence caution" evidence="8">
    <conflict type="frameshift">
        <sequence resource="EMBL-CDS" id="AAC53056"/>
    </conflict>
</comment>
<evidence type="ECO:0000250" key="1"/>
<evidence type="ECO:0000250" key="2">
    <source>
        <dbReference type="UniProtKB" id="P41214"/>
    </source>
</evidence>
<evidence type="ECO:0000255" key="3">
    <source>
        <dbReference type="PROSITE-ProRule" id="PRU00161"/>
    </source>
</evidence>
<evidence type="ECO:0000255" key="4">
    <source>
        <dbReference type="PROSITE-ProRule" id="PRU00200"/>
    </source>
</evidence>
<evidence type="ECO:0000255" key="5">
    <source>
        <dbReference type="PROSITE-ProRule" id="PRU01273"/>
    </source>
</evidence>
<evidence type="ECO:0000256" key="6">
    <source>
        <dbReference type="SAM" id="MobiDB-lite"/>
    </source>
</evidence>
<evidence type="ECO:0000303" key="7">
    <source>
    </source>
</evidence>
<evidence type="ECO:0000305" key="8"/>
<evidence type="ECO:0007744" key="9">
    <source>
    </source>
</evidence>
<keyword id="KW-0007">Acetylation</keyword>
<keyword id="KW-0025">Alternative splicing</keyword>
<keyword id="KW-0963">Cytoplasm</keyword>
<keyword id="KW-0396">Initiation factor</keyword>
<keyword id="KW-0597">Phosphoprotein</keyword>
<keyword id="KW-0648">Protein biosynthesis</keyword>
<keyword id="KW-1185">Reference proteome</keyword>
<accession>Q61211</accession>
<accession>Q3TDE0</accession>
<accession>Q3THV5</accession>
<accession>Q3TTP4</accession>
<accession>Q8C491</accession>
<accession>Q8CBF1</accession>
<accession>Q8CC17</accession>
<accession>Q8R1I9</accession>
<accession>Q8R3M5</accession>
<gene>
    <name type="primary">Eif2d</name>
    <name type="synonym">Lgtn</name>
</gene>
<sequence>MFAKAFRVKSNTAIKGSDRRKLRADVTAAFPALGTDQISELIPGKEELNVVKLYVHKGDSVTVYTSGGNPILFELEKNLYPTVYTLWAYPDILPTFITWPLVLEKLVGGADLMLPGVVVPPTGLPQVQQGDLCAIALVGNRAPVAIGVAAMSTAQMLASGLKGKGVSVLHTYQDHLWRSGDKSSPPAIAPLDPTDSCEEKVHLGLQGNLKSLTLDGEEENGQVPLREASEDTSSRAPSQDSLDGKPLQEQMDDLLLRCFLHALKSRVKKADLPLLTSTLLGSHMFSCCPEGQQLDIKKSSYKKLSKFLQHMQQEQIVQVKELSKGVESIVAVDWRHPRITSFVIPEPSLTSQTVQEVSREQPYLPPDIKSLYCVPANMTQLFLESGHKKGSTLEGSEVRKIITDYAKRNRLVDADNRNLVKLDPILCDCILEKNEQHLVTKLPWDCLLTRCLKNMQPAYQVTFPGQEPILKKGKLCPIDITLALKTYNKKVTVVRNLETYGLDPCSVAAILQQRCQASTIVSPAPGAKDSLQVQVQGNQIHHLGQLLLEEYRLPGKYIQGLEKAPKPGKK</sequence>